<organism>
    <name type="scientific">Homo sapiens</name>
    <name type="common">Human</name>
    <dbReference type="NCBI Taxonomy" id="9606"/>
    <lineage>
        <taxon>Eukaryota</taxon>
        <taxon>Metazoa</taxon>
        <taxon>Chordata</taxon>
        <taxon>Craniata</taxon>
        <taxon>Vertebrata</taxon>
        <taxon>Euteleostomi</taxon>
        <taxon>Mammalia</taxon>
        <taxon>Eutheria</taxon>
        <taxon>Euarchontoglires</taxon>
        <taxon>Primates</taxon>
        <taxon>Haplorrhini</taxon>
        <taxon>Catarrhini</taxon>
        <taxon>Hominidae</taxon>
        <taxon>Homo</taxon>
    </lineage>
</organism>
<dbReference type="EMBL" id="X16560">
    <property type="protein sequence ID" value="CAA34559.1"/>
    <property type="molecule type" value="mRNA"/>
</dbReference>
<dbReference type="EMBL" id="AF067639">
    <property type="protein sequence ID" value="AAC73062.1"/>
    <property type="molecule type" value="Genomic_DNA"/>
</dbReference>
<dbReference type="EMBL" id="AF067638">
    <property type="protein sequence ID" value="AAC73062.1"/>
    <property type="status" value="JOINED"/>
    <property type="molecule type" value="Genomic_DNA"/>
</dbReference>
<dbReference type="EMBL" id="BT007098">
    <property type="protein sequence ID" value="AAP35762.1"/>
    <property type="molecule type" value="mRNA"/>
</dbReference>
<dbReference type="EMBL" id="BC001005">
    <property type="protein sequence ID" value="AAH01005.1"/>
    <property type="molecule type" value="mRNA"/>
</dbReference>
<dbReference type="EMBL" id="BC007498">
    <property type="protein sequence ID" value="AAH07498.1"/>
    <property type="molecule type" value="mRNA"/>
</dbReference>
<dbReference type="CCDS" id="CCDS4063.1"/>
<dbReference type="PIR" id="S15763">
    <property type="entry name" value="OSHU7C"/>
</dbReference>
<dbReference type="RefSeq" id="NP_001858.1">
    <property type="nucleotide sequence ID" value="NM_001867.3"/>
</dbReference>
<dbReference type="PDB" id="5Z62">
    <property type="method" value="EM"/>
    <property type="resolution" value="3.60 A"/>
    <property type="chains" value="L=17-63"/>
</dbReference>
<dbReference type="PDBsum" id="5Z62"/>
<dbReference type="SMR" id="P15954"/>
<dbReference type="BioGRID" id="107743">
    <property type="interactions" value="122"/>
</dbReference>
<dbReference type="ComplexPortal" id="CPX-6123">
    <property type="entry name" value="Mitochondrial respiratory chain complex IV"/>
</dbReference>
<dbReference type="CORUM" id="P15954"/>
<dbReference type="FunCoup" id="P15954">
    <property type="interactions" value="849"/>
</dbReference>
<dbReference type="IntAct" id="P15954">
    <property type="interactions" value="20"/>
</dbReference>
<dbReference type="MINT" id="P15954"/>
<dbReference type="STRING" id="9606.ENSP00000425759"/>
<dbReference type="DrugBank" id="DB02659">
    <property type="generic name" value="Cholic Acid"/>
</dbReference>
<dbReference type="DrugBank" id="DB04464">
    <property type="generic name" value="N-Formylmethionine"/>
</dbReference>
<dbReference type="TCDB" id="3.D.4.11.1">
    <property type="family name" value="the proton-translocating cytochrome oxidase (cox) superfamily"/>
</dbReference>
<dbReference type="iPTMnet" id="P15954"/>
<dbReference type="PhosphoSitePlus" id="P15954"/>
<dbReference type="SwissPalm" id="P15954"/>
<dbReference type="BioMuta" id="COX7C"/>
<dbReference type="jPOST" id="P15954"/>
<dbReference type="MassIVE" id="P15954"/>
<dbReference type="PaxDb" id="9606-ENSP00000425759"/>
<dbReference type="PeptideAtlas" id="P15954"/>
<dbReference type="ProteomicsDB" id="53259"/>
<dbReference type="Pumba" id="P15954"/>
<dbReference type="TopDownProteomics" id="P15954"/>
<dbReference type="Antibodypedia" id="44491">
    <property type="antibodies" value="54 antibodies from 17 providers"/>
</dbReference>
<dbReference type="DNASU" id="1350"/>
<dbReference type="Ensembl" id="ENST00000247655.4">
    <property type="protein sequence ID" value="ENSP00000247655.3"/>
    <property type="gene ID" value="ENSG00000127184.13"/>
</dbReference>
<dbReference type="Ensembl" id="ENST00000509578.1">
    <property type="protein sequence ID" value="ENSP00000425759.1"/>
    <property type="gene ID" value="ENSG00000127184.13"/>
</dbReference>
<dbReference type="GeneID" id="1350"/>
<dbReference type="KEGG" id="hsa:1350"/>
<dbReference type="MANE-Select" id="ENST00000247655.4">
    <property type="protein sequence ID" value="ENSP00000247655.3"/>
    <property type="RefSeq nucleotide sequence ID" value="NM_001867.3"/>
    <property type="RefSeq protein sequence ID" value="NP_001858.1"/>
</dbReference>
<dbReference type="UCSC" id="uc003kir.4">
    <property type="organism name" value="human"/>
</dbReference>
<dbReference type="AGR" id="HGNC:2292"/>
<dbReference type="CTD" id="1350"/>
<dbReference type="DisGeNET" id="1350"/>
<dbReference type="GeneCards" id="COX7C"/>
<dbReference type="HGNC" id="HGNC:2292">
    <property type="gene designation" value="COX7C"/>
</dbReference>
<dbReference type="HPA" id="ENSG00000127184">
    <property type="expression patterns" value="Tissue enhanced (skeletal)"/>
</dbReference>
<dbReference type="MalaCards" id="COX7C"/>
<dbReference type="MIM" id="603774">
    <property type="type" value="gene"/>
</dbReference>
<dbReference type="neXtProt" id="NX_P15954"/>
<dbReference type="NIAGADS" id="ENSG00000127184"/>
<dbReference type="OpenTargets" id="ENSG00000127184"/>
<dbReference type="PharmGKB" id="PA26812"/>
<dbReference type="VEuPathDB" id="HostDB:ENSG00000127184"/>
<dbReference type="eggNOG" id="KOG4527">
    <property type="taxonomic scope" value="Eukaryota"/>
</dbReference>
<dbReference type="GeneTree" id="ENSGT00390000018086"/>
<dbReference type="HOGENOM" id="CLU_194769_0_0_1"/>
<dbReference type="InParanoid" id="P15954"/>
<dbReference type="OMA" id="SIENKWR"/>
<dbReference type="OrthoDB" id="9509250at2759"/>
<dbReference type="PAN-GO" id="P15954">
    <property type="GO annotations" value="1 GO annotation based on evolutionary models"/>
</dbReference>
<dbReference type="PhylomeDB" id="P15954"/>
<dbReference type="TreeFam" id="TF105069"/>
<dbReference type="BioCyc" id="MetaCyc:HS05077-MONOMER"/>
<dbReference type="PathwayCommons" id="P15954"/>
<dbReference type="Reactome" id="R-HSA-5628897">
    <property type="pathway name" value="TP53 Regulates Metabolic Genes"/>
</dbReference>
<dbReference type="Reactome" id="R-HSA-611105">
    <property type="pathway name" value="Respiratory electron transport"/>
</dbReference>
<dbReference type="Reactome" id="R-HSA-9707564">
    <property type="pathway name" value="Cytoprotection by HMOX1"/>
</dbReference>
<dbReference type="Reactome" id="R-HSA-9864848">
    <property type="pathway name" value="Complex IV assembly"/>
</dbReference>
<dbReference type="SignaLink" id="P15954"/>
<dbReference type="SIGNOR" id="P15954"/>
<dbReference type="UniPathway" id="UPA00705"/>
<dbReference type="BioGRID-ORCS" id="1350">
    <property type="hits" value="523 hits in 1134 CRISPR screens"/>
</dbReference>
<dbReference type="ChiTaRS" id="COX7C">
    <property type="organism name" value="human"/>
</dbReference>
<dbReference type="GeneWiki" id="COX7C"/>
<dbReference type="GenomeRNAi" id="1350"/>
<dbReference type="Pharos" id="P15954">
    <property type="development level" value="Tbio"/>
</dbReference>
<dbReference type="PRO" id="PR:P15954"/>
<dbReference type="Proteomes" id="UP000005640">
    <property type="component" value="Chromosome 5"/>
</dbReference>
<dbReference type="RNAct" id="P15954">
    <property type="molecule type" value="protein"/>
</dbReference>
<dbReference type="Bgee" id="ENSG00000127184">
    <property type="expression patterns" value="Expressed in heart right ventricle and 205 other cell types or tissues"/>
</dbReference>
<dbReference type="ExpressionAtlas" id="P15954">
    <property type="expression patterns" value="baseline and differential"/>
</dbReference>
<dbReference type="GO" id="GO:0005743">
    <property type="term" value="C:mitochondrial inner membrane"/>
    <property type="evidence" value="ECO:0000304"/>
    <property type="project" value="Reactome"/>
</dbReference>
<dbReference type="GO" id="GO:0031966">
    <property type="term" value="C:mitochondrial membrane"/>
    <property type="evidence" value="ECO:0000314"/>
    <property type="project" value="ComplexPortal"/>
</dbReference>
<dbReference type="GO" id="GO:0005739">
    <property type="term" value="C:mitochondrion"/>
    <property type="evidence" value="ECO:0007005"/>
    <property type="project" value="UniProtKB"/>
</dbReference>
<dbReference type="GO" id="GO:0045277">
    <property type="term" value="C:respiratory chain complex IV"/>
    <property type="evidence" value="ECO:0000314"/>
    <property type="project" value="UniProtKB"/>
</dbReference>
<dbReference type="GO" id="GO:0045333">
    <property type="term" value="P:cellular respiration"/>
    <property type="evidence" value="ECO:0000303"/>
    <property type="project" value="ComplexPortal"/>
</dbReference>
<dbReference type="GO" id="GO:0006091">
    <property type="term" value="P:generation of precursor metabolites and energy"/>
    <property type="evidence" value="ECO:0000304"/>
    <property type="project" value="ProtInc"/>
</dbReference>
<dbReference type="GO" id="GO:0006123">
    <property type="term" value="P:mitochondrial electron transport, cytochrome c to oxygen"/>
    <property type="evidence" value="ECO:0000318"/>
    <property type="project" value="GO_Central"/>
</dbReference>
<dbReference type="CDD" id="cd00929">
    <property type="entry name" value="Cyt_c_Oxidase_VIIc"/>
    <property type="match status" value="1"/>
</dbReference>
<dbReference type="FunFam" id="4.10.49.10:FF:000001">
    <property type="entry name" value="Cytochrome c oxidase subunit 7C"/>
    <property type="match status" value="1"/>
</dbReference>
<dbReference type="Gene3D" id="4.10.49.10">
    <property type="entry name" value="Cytochrome c oxidase subunit VIIc"/>
    <property type="match status" value="1"/>
</dbReference>
<dbReference type="InterPro" id="IPR004202">
    <property type="entry name" value="COX7C/Cox8"/>
</dbReference>
<dbReference type="InterPro" id="IPR036636">
    <property type="entry name" value="COX7C/Cox8_sf"/>
</dbReference>
<dbReference type="PANTHER" id="PTHR13313:SF1">
    <property type="entry name" value="CYTOCHROME C OXIDASE SUBUNIT 7C, MITOCHONDRIAL"/>
    <property type="match status" value="1"/>
</dbReference>
<dbReference type="PANTHER" id="PTHR13313">
    <property type="entry name" value="CYTOCHROME C OXIDASE SUBUNIT VIIC"/>
    <property type="match status" value="1"/>
</dbReference>
<dbReference type="Pfam" id="PF02935">
    <property type="entry name" value="COX7C"/>
    <property type="match status" value="1"/>
</dbReference>
<dbReference type="SUPFAM" id="SSF81427">
    <property type="entry name" value="Mitochondrial cytochrome c oxidase subunit VIIc (aka VIIIa)"/>
    <property type="match status" value="1"/>
</dbReference>
<gene>
    <name type="primary">COX7C</name>
</gene>
<keyword id="KW-0002">3D-structure</keyword>
<keyword id="KW-0007">Acetylation</keyword>
<keyword id="KW-0903">Direct protein sequencing</keyword>
<keyword id="KW-0472">Membrane</keyword>
<keyword id="KW-0496">Mitochondrion</keyword>
<keyword id="KW-0999">Mitochondrion inner membrane</keyword>
<keyword id="KW-1267">Proteomics identification</keyword>
<keyword id="KW-1185">Reference proteome</keyword>
<keyword id="KW-0809">Transit peptide</keyword>
<keyword id="KW-0812">Transmembrane</keyword>
<keyword id="KW-1133">Transmembrane helix</keyword>
<name>COX7C_HUMAN</name>
<sequence>MLGQSIRRFTTSVVRRSHYEEGPGKNLPFSVENKWSLLAKMCLYFGSAFATPFLVVRHQLLKT</sequence>
<protein>
    <recommendedName>
        <fullName>Cytochrome c oxidase subunit 7C, mitochondrial</fullName>
    </recommendedName>
    <alternativeName>
        <fullName>Cytochrome c oxidase polypeptide VIIc</fullName>
    </alternativeName>
</protein>
<proteinExistence type="evidence at protein level"/>
<accession>P15954</accession>
<accession>Q6NR81</accession>
<evidence type="ECO:0000250" key="1">
    <source>
        <dbReference type="UniProtKB" id="P00430"/>
    </source>
</evidence>
<evidence type="ECO:0000250" key="2">
    <source>
        <dbReference type="UniProtKB" id="P04039"/>
    </source>
</evidence>
<evidence type="ECO:0000250" key="3">
    <source>
        <dbReference type="UniProtKB" id="P17665"/>
    </source>
</evidence>
<evidence type="ECO:0000269" key="4">
    <source>
    </source>
</evidence>
<evidence type="ECO:0000269" key="5">
    <source>
    </source>
</evidence>
<evidence type="ECO:0000269" key="6">
    <source>
    </source>
</evidence>
<evidence type="ECO:0000269" key="7">
    <source>
    </source>
</evidence>
<evidence type="ECO:0000305" key="8"/>
<evidence type="ECO:0007744" key="9">
    <source>
    </source>
</evidence>
<comment type="function">
    <text evidence="2">Component of the cytochrome c oxidase, the last enzyme in the mitochondrial electron transport chain which drives oxidative phosphorylation. The respiratory chain contains 3 multisubunit complexes succinate dehydrogenase (complex II, CII), ubiquinol-cytochrome c oxidoreductase (cytochrome b-c1 complex, complex III, CIII) and cytochrome c oxidase (complex IV, CIV), that cooperate to transfer electrons derived from NADH and succinate to molecular oxygen, creating an electrochemical gradient over the inner membrane that drives transmembrane transport and the ATP synthase. Cytochrome c oxidase is the component of the respiratory chain that catalyzes the reduction of oxygen to water. Electrons originating from reduced cytochrome c in the intermembrane space (IMS) are transferred via the dinuclear copper A center (CU(A)) of subunit 2 and heme A of subunit 1 to the active site in subunit 1, a binuclear center (BNC) formed by heme A3 and copper B (CU(B)). The BNC reduces molecular oxygen to 2 water molecules using 4 electrons from cytochrome c in the IMS and 4 protons from the mitochondrial matrix.</text>
</comment>
<comment type="pathway">
    <text evidence="2">Energy metabolism; oxidative phosphorylation.</text>
</comment>
<comment type="subunit">
    <text evidence="5 6 7">Component of the cytochrome c oxidase (complex IV, CIV), a multisubunit enzyme composed of 14 subunits. The complex is composed of a catalytic core of 3 subunits MT-CO1, MT-CO2 and MT-CO3, encoded in the mitochondrial DNA, and 11 supernumerary subunits COX4I1 (or COX4I2), COX5A, COX5B, COX6A1 (or COX6A2), COX6B1 (or COX6B2), COX6C, COX7A2 (or COX7A1), COX7B, COX7C, COX8A and NDUFA4, which are encoded in the nuclear genome (PubMed:30030519). The complex exists as a monomer or a dimer and forms supercomplexes (SCs) in the inner mitochondrial membrane with NADH-ubiquinone oxidoreductase (complex I, CI) and ubiquinol-cytochrome c oxidoreductase (cytochrome b-c1 complex, complex III, CIII), resulting in different assemblies (supercomplex SCI(1)III(2)IV(1) and megacomplex MCI(2)III(2)IV(2)) (PubMed:28844695). Interacts with RAB5IF (PubMed:31536960).</text>
</comment>
<comment type="interaction">
    <interactant intactId="EBI-2606678">
        <id>P15954</id>
    </interactant>
    <interactant intactId="EBI-7062247">
        <id>Q9UHD4</id>
        <label>CIDEB</label>
    </interactant>
    <organismsDiffer>false</organismsDiffer>
    <experiments>3</experiments>
</comment>
<comment type="interaction">
    <interactant intactId="EBI-2606678">
        <id>P15954</id>
    </interactant>
    <interactant intactId="EBI-5650739">
        <id>P43356</id>
        <label>MAGEA2B</label>
    </interactant>
    <organismsDiffer>false</organismsDiffer>
    <experiments>3</experiments>
</comment>
<comment type="subcellular location">
    <subcellularLocation>
        <location evidence="6">Mitochondrion inner membrane</location>
        <topology evidence="6">Single-pass membrane protein</topology>
    </subcellularLocation>
</comment>
<comment type="similarity">
    <text evidence="8">Belongs to the cytochrome c oxidase VIIc family.</text>
</comment>
<reference key="1">
    <citation type="journal article" date="1990" name="Nucleic Acids Res.">
        <title>Sequence of a cDNA specifying subunit VIIc of human cytochrome c oxidase.</title>
        <authorList>
            <person name="Koga Y."/>
            <person name="Fabrizi G.M."/>
            <person name="Mita S."/>
            <person name="Arnaudo E."/>
            <person name="Lomax M.I."/>
            <person name="Agua M.S."/>
            <person name="Grossman L.I."/>
            <person name="Schon E.A."/>
        </authorList>
    </citation>
    <scope>NUCLEOTIDE SEQUENCE [MRNA]</scope>
    <source>
        <tissue>Skeletal muscle</tissue>
    </source>
</reference>
<reference key="2">
    <citation type="journal article" date="1998" name="Cytogenet. Cell Genet.">
        <title>Assignment of the human genes coding for cytochrome c oxidase subunits Va (COX5A), VIc (COX6C) and VIIc (COX7C) to chromosome bands 15q25, 8q22--&gt;q23 and 5q14 and of three pseudogenes (COX5AP1, COX6CP1, COX7CP1) to 14q22, 16p12 and 13q14--&gt;q21 by FISH and radiation hybrid mapping.</title>
        <authorList>
            <person name="Hofmann S."/>
            <person name="Lichtner P."/>
            <person name="Schuffenhauer S."/>
            <person name="Gerbitz K.D."/>
            <person name="Meitinger T."/>
        </authorList>
    </citation>
    <scope>NUCLEOTIDE SEQUENCE [GENOMIC DNA]</scope>
</reference>
<reference key="3">
    <citation type="submission" date="2003-05" db="EMBL/GenBank/DDBJ databases">
        <title>Cloning of human full-length CDSs in BD Creator(TM) system donor vector.</title>
        <authorList>
            <person name="Kalnine N."/>
            <person name="Chen X."/>
            <person name="Rolfs A."/>
            <person name="Halleck A."/>
            <person name="Hines L."/>
            <person name="Eisenstein S."/>
            <person name="Koundinya M."/>
            <person name="Raphael J."/>
            <person name="Moreira D."/>
            <person name="Kelley T."/>
            <person name="LaBaer J."/>
            <person name="Lin Y."/>
            <person name="Phelan M."/>
            <person name="Farmer A."/>
        </authorList>
    </citation>
    <scope>NUCLEOTIDE SEQUENCE [LARGE SCALE MRNA]</scope>
</reference>
<reference key="4">
    <citation type="journal article" date="2004" name="Genome Res.">
        <title>The status, quality, and expansion of the NIH full-length cDNA project: the Mammalian Gene Collection (MGC).</title>
        <authorList>
            <consortium name="The MGC Project Team"/>
        </authorList>
    </citation>
    <scope>NUCLEOTIDE SEQUENCE [LARGE SCALE MRNA]</scope>
    <source>
        <tissue>Lung</tissue>
        <tissue>Ovary</tissue>
    </source>
</reference>
<reference key="5">
    <citation type="journal article" date="1992" name="Eur. J. Biochem.">
        <title>Subunits VIIa,b,c of human cytochrome c oxidase. Identification of both 'heart-type' and 'liver-type' isoforms of subunit VIIa in human heart.</title>
        <authorList>
            <person name="van Kuilenburg A.B.P."/>
            <person name="van Beeumen J.J."/>
            <person name="van der Meer N.M."/>
            <person name="Muijsers A.O."/>
        </authorList>
    </citation>
    <scope>PROTEIN SEQUENCE OF 17-40</scope>
    <source>
        <tissue>Heart</tissue>
        <tissue>Skeletal muscle</tissue>
    </source>
</reference>
<reference key="6">
    <citation type="journal article" date="2011" name="BMC Syst. Biol.">
        <title>Initial characterization of the human central proteome.</title>
        <authorList>
            <person name="Burkard T.R."/>
            <person name="Planyavsky M."/>
            <person name="Kaupe I."/>
            <person name="Breitwieser F.P."/>
            <person name="Buerckstuemmer T."/>
            <person name="Bennett K.L."/>
            <person name="Superti-Furga G."/>
            <person name="Colinge J."/>
        </authorList>
    </citation>
    <scope>IDENTIFICATION BY MASS SPECTROMETRY [LARGE SCALE ANALYSIS]</scope>
</reference>
<reference key="7">
    <citation type="journal article" date="2015" name="Proteomics">
        <title>N-terminome analysis of the human mitochondrial proteome.</title>
        <authorList>
            <person name="Vaca Jacome A.S."/>
            <person name="Rabilloud T."/>
            <person name="Schaeffer-Reiss C."/>
            <person name="Rompais M."/>
            <person name="Ayoub D."/>
            <person name="Lane L."/>
            <person name="Bairoch A."/>
            <person name="Van Dorsselaer A."/>
            <person name="Carapito C."/>
        </authorList>
    </citation>
    <scope>CLEAVAGE OF TRANSIT PEPTIDE [LARGE SCALE ANALYSIS] AFTER ARG-16</scope>
    <scope>IDENTIFICATION BY MASS SPECTROMETRY [LARGE SCALE ANALYSIS]</scope>
</reference>
<reference key="8">
    <citation type="journal article" date="2019" name="IScience">
        <title>Rewiring of the Human Mitochondrial Interactome during Neuronal Reprogramming Reveals Regulators of the Respirasome and Neurogenesis.</title>
        <authorList>
            <person name="Moutaoufik M.T."/>
            <person name="Malty R."/>
            <person name="Amin S."/>
            <person name="Zhang Q."/>
            <person name="Phanse S."/>
            <person name="Gagarinova A."/>
            <person name="Zilocchi M."/>
            <person name="Hoell L."/>
            <person name="Minic Z."/>
            <person name="Gagarinova M."/>
            <person name="Aoki H."/>
            <person name="Stockwell J."/>
            <person name="Jessulat M."/>
            <person name="Goebels F."/>
            <person name="Broderick K."/>
            <person name="Scott N.E."/>
            <person name="Vlasblom J."/>
            <person name="Musso G."/>
            <person name="Prasad B."/>
            <person name="Lamantea E."/>
            <person name="Garavaglia B."/>
            <person name="Rajput A."/>
            <person name="Murayama K."/>
            <person name="Okazaki Y."/>
            <person name="Foster L.J."/>
            <person name="Bader G.D."/>
            <person name="Cayabyab F.S."/>
            <person name="Babu M."/>
        </authorList>
    </citation>
    <scope>IDENTIFICATION BY MASS SPECTROMETRY</scope>
    <scope>INTERACTION WITH RAB5IF</scope>
</reference>
<reference key="9">
    <citation type="journal article" date="2017" name="Cell">
        <title>Architecture of human mitochondrial respiratory megacomplex I2III2IV2.</title>
        <authorList>
            <person name="Guo R."/>
            <person name="Zong S."/>
            <person name="Wu M."/>
            <person name="Gu J."/>
            <person name="Yang M."/>
        </authorList>
    </citation>
    <scope>STRUCTURE BY ELECTRON MICROSCOPY (3.90 ANGSTROMS)</scope>
    <scope>SUBUNIT</scope>
</reference>
<reference key="10">
    <citation type="journal article" date="2018" name="Cell Res.">
        <title>Structure of the intact 14-subunit human cytochrome c oxidase.</title>
        <authorList>
            <person name="Zong S."/>
            <person name="Wu M."/>
            <person name="Gu J."/>
            <person name="Liu T."/>
            <person name="Guo R."/>
            <person name="Yang M."/>
        </authorList>
    </citation>
    <scope>STRUCTURE BY ELECTRON MICROSCOPY (3.60 ANGSTROMS)</scope>
</reference>
<feature type="transit peptide" description="Mitochondrion" evidence="4 9">
    <location>
        <begin position="1"/>
        <end position="16"/>
    </location>
</feature>
<feature type="chain" id="PRO_0000006164" description="Cytochrome c oxidase subunit 7C, mitochondrial">
    <location>
        <begin position="17"/>
        <end position="63"/>
    </location>
</feature>
<feature type="topological domain" description="Mitochondrial matrix" evidence="6">
    <location>
        <begin position="17"/>
        <end position="33"/>
    </location>
</feature>
<feature type="transmembrane region" description="Helical" evidence="1">
    <location>
        <begin position="34"/>
        <end position="60"/>
    </location>
</feature>
<feature type="topological domain" description="Mitochondrial intermembrane" evidence="6">
    <location>
        <begin position="61"/>
        <end position="63"/>
    </location>
</feature>
<feature type="modified residue" description="N6-acetyllysine; alternate" evidence="3">
    <location>
        <position position="25"/>
    </location>
</feature>
<feature type="modified residue" description="N6-succinyllysine; alternate" evidence="3">
    <location>
        <position position="25"/>
    </location>
</feature>